<evidence type="ECO:0000305" key="1"/>
<feature type="chain" id="PRO_0000210140" description="mRNA-capping enzyme small subunit">
    <location>
        <begin position="1"/>
        <end position="287"/>
    </location>
</feature>
<keyword id="KW-0489">Methyltransferase</keyword>
<keyword id="KW-0506">mRNA capping</keyword>
<keyword id="KW-0507">mRNA processing</keyword>
<keyword id="KW-0949">S-adenosyl-L-methionine</keyword>
<keyword id="KW-0808">Transferase</keyword>
<keyword id="KW-0946">Virion</keyword>
<comment type="function">
    <text>Catalyzes the last reaction in the mRNA cap formation pathway.</text>
</comment>
<comment type="catalytic activity">
    <reaction>
        <text>a 5'-end (5'-triphosphoguanosine)-ribonucleoside in mRNA + S-adenosyl-L-methionine = a 5'-end (N(7)-methyl 5'-triphosphoguanosine)-ribonucleoside in mRNA + S-adenosyl-L-homocysteine</text>
        <dbReference type="Rhea" id="RHEA:67008"/>
        <dbReference type="Rhea" id="RHEA-COMP:17166"/>
        <dbReference type="Rhea" id="RHEA-COMP:17167"/>
        <dbReference type="ChEBI" id="CHEBI:57856"/>
        <dbReference type="ChEBI" id="CHEBI:59789"/>
        <dbReference type="ChEBI" id="CHEBI:156461"/>
        <dbReference type="ChEBI" id="CHEBI:167617"/>
        <dbReference type="EC" id="2.1.1.56"/>
    </reaction>
</comment>
<comment type="subunit">
    <text>Heterodimer of a large and a small subunit.</text>
</comment>
<comment type="subcellular location">
    <subcellularLocation>
        <location evidence="1">Virion</location>
    </subcellularLocation>
    <text>All the enzymes and other proteins required to synthesize early mRNAs are packaged within the virion core along with the DNA genome.</text>
</comment>
<protein>
    <recommendedName>
        <fullName>mRNA-capping enzyme small subunit</fullName>
    </recommendedName>
    <alternativeName>
        <fullName>mRNA (guanine-N(7))-methyltransferase</fullName>
        <ecNumber>2.1.1.56</ecNumber>
    </alternativeName>
    <alternativeName>
        <fullName>mRNA cap methyltransferase</fullName>
    </alternativeName>
</protein>
<organismHost>
    <name type="scientific">Sus scrofa</name>
    <name type="common">Pig</name>
    <dbReference type="NCBI Taxonomy" id="9823"/>
</organismHost>
<proteinExistence type="predicted"/>
<dbReference type="EC" id="2.1.1.56"/>
<dbReference type="EMBL" id="L22012">
    <property type="protein sequence ID" value="AAA16177.1"/>
    <property type="molecule type" value="Unassigned_DNA"/>
</dbReference>
<dbReference type="RefSeq" id="NP_570246.1">
    <property type="nucleotide sequence ID" value="NC_003389.1"/>
</dbReference>
<dbReference type="SMR" id="Q08512"/>
<dbReference type="GeneID" id="932372"/>
<dbReference type="KEGG" id="vg:932372"/>
<dbReference type="GO" id="GO:0044423">
    <property type="term" value="C:virion component"/>
    <property type="evidence" value="ECO:0007669"/>
    <property type="project" value="UniProtKB-KW"/>
</dbReference>
<dbReference type="GO" id="GO:0004482">
    <property type="term" value="F:mRNA 5'-cap (guanine-N7-)-methyltransferase activity"/>
    <property type="evidence" value="ECO:0007669"/>
    <property type="project" value="UniProtKB-EC"/>
</dbReference>
<dbReference type="Gene3D" id="3.40.50.11680">
    <property type="entry name" value="Poxvirus mRNA capping enzyme, small subunit"/>
    <property type="match status" value="1"/>
</dbReference>
<dbReference type="InterPro" id="IPR005009">
    <property type="entry name" value="Poxvirus_mRNA-cap_ssu"/>
</dbReference>
<dbReference type="InterPro" id="IPR043096">
    <property type="entry name" value="Poxvirus_mRNA-cap_ssu_sf"/>
</dbReference>
<dbReference type="Pfam" id="PF03341">
    <property type="entry name" value="Pox_mRNA-cap"/>
    <property type="match status" value="1"/>
</dbReference>
<accession>Q08512</accession>
<organism>
    <name type="scientific">Swinepox virus (strain Kasza)</name>
    <name type="common">SWPV</name>
    <dbReference type="NCBI Taxonomy" id="10277"/>
    <lineage>
        <taxon>Viruses</taxon>
        <taxon>Varidnaviria</taxon>
        <taxon>Bamfordvirae</taxon>
        <taxon>Nucleocytoviricota</taxon>
        <taxon>Pokkesviricetes</taxon>
        <taxon>Chitovirales</taxon>
        <taxon>Poxviridae</taxon>
        <taxon>Chordopoxvirinae</taxon>
        <taxon>Suipoxvirus</taxon>
        <taxon>Swinepox virus</taxon>
    </lineage>
</organism>
<sequence length="287" mass="33488">MDKITRNIREGIHILLPFYENLPDISLSLGKSPLPSLEYGTNYFLQLSRVNDLNRLPTDMLSLFTHDIMLPETDMEKVYDILNIKSVKSYGKSIKADAVVADLSARNRLFKKDRELIKSNNYLTDNNLYISDYKMLTFEVFRPLFDLSSEKYCIVKLPTLFGKCVIDTIRVYCSLFKSVRLFKCASDSWLKDSAIMVASDIYKKNIDIFMSHIRSVLKSQYWKDSNNVQFSILKESVDKEFINKFLEFSTSVYESLYYVHSLLYSSMISDNKSIENEYQKKLTKLLL</sequence>
<reference key="1">
    <citation type="journal article" date="1993" name="Virology">
        <title>DNA sequence analysis of conserved and unique regions of swinepox virus: identification of genetic elements supporting phenotypic observations including a novel G protein-coupled receptor homologue.</title>
        <authorList>
            <person name="Massung R.F."/>
            <person name="Jayarama V."/>
            <person name="Moyer R.W."/>
        </authorList>
    </citation>
    <scope>NUCLEOTIDE SEQUENCE</scope>
</reference>
<name>MCES_SWPVK</name>